<evidence type="ECO:0000255" key="1">
    <source>
        <dbReference type="HAMAP-Rule" id="MF_01369"/>
    </source>
</evidence>
<evidence type="ECO:0000305" key="2"/>
<accession>Q2IXQ8</accession>
<name>RL23_RHOP2</name>
<reference key="1">
    <citation type="submission" date="2006-01" db="EMBL/GenBank/DDBJ databases">
        <title>Complete sequence of Rhodopseudomonas palustris HaA2.</title>
        <authorList>
            <consortium name="US DOE Joint Genome Institute"/>
            <person name="Copeland A."/>
            <person name="Lucas S."/>
            <person name="Lapidus A."/>
            <person name="Barry K."/>
            <person name="Detter J.C."/>
            <person name="Glavina T."/>
            <person name="Hammon N."/>
            <person name="Israni S."/>
            <person name="Pitluck S."/>
            <person name="Chain P."/>
            <person name="Malfatti S."/>
            <person name="Shin M."/>
            <person name="Vergez L."/>
            <person name="Schmutz J."/>
            <person name="Larimer F."/>
            <person name="Land M."/>
            <person name="Hauser L."/>
            <person name="Pelletier D.A."/>
            <person name="Kyrpides N."/>
            <person name="Anderson I."/>
            <person name="Oda Y."/>
            <person name="Harwood C.S."/>
            <person name="Richardson P."/>
        </authorList>
    </citation>
    <scope>NUCLEOTIDE SEQUENCE [LARGE SCALE GENOMIC DNA]</scope>
    <source>
        <strain>HaA2</strain>
    </source>
</reference>
<keyword id="KW-1185">Reference proteome</keyword>
<keyword id="KW-0687">Ribonucleoprotein</keyword>
<keyword id="KW-0689">Ribosomal protein</keyword>
<keyword id="KW-0694">RNA-binding</keyword>
<keyword id="KW-0699">rRNA-binding</keyword>
<proteinExistence type="inferred from homology"/>
<sequence>MKSIDPRHYDVIVSPVVTEKATMASEHNKVVFKVQSGATKPQIKEAVEKLFDVKVKSVNTLVRKGKSKSFRGTFGTQSDVKRAVVTLEEGHRIDVTTGL</sequence>
<gene>
    <name evidence="1" type="primary">rplW</name>
    <name type="ordered locus">RPB_2297</name>
</gene>
<feature type="chain" id="PRO_0000272826" description="Large ribosomal subunit protein uL23">
    <location>
        <begin position="1"/>
        <end position="99"/>
    </location>
</feature>
<organism>
    <name type="scientific">Rhodopseudomonas palustris (strain HaA2)</name>
    <dbReference type="NCBI Taxonomy" id="316058"/>
    <lineage>
        <taxon>Bacteria</taxon>
        <taxon>Pseudomonadati</taxon>
        <taxon>Pseudomonadota</taxon>
        <taxon>Alphaproteobacteria</taxon>
        <taxon>Hyphomicrobiales</taxon>
        <taxon>Nitrobacteraceae</taxon>
        <taxon>Rhodopseudomonas</taxon>
    </lineage>
</organism>
<protein>
    <recommendedName>
        <fullName evidence="1">Large ribosomal subunit protein uL23</fullName>
    </recommendedName>
    <alternativeName>
        <fullName evidence="2">50S ribosomal protein L23</fullName>
    </alternativeName>
</protein>
<dbReference type="EMBL" id="CP000250">
    <property type="protein sequence ID" value="ABD07002.1"/>
    <property type="molecule type" value="Genomic_DNA"/>
</dbReference>
<dbReference type="RefSeq" id="WP_011441187.1">
    <property type="nucleotide sequence ID" value="NC_007778.1"/>
</dbReference>
<dbReference type="SMR" id="Q2IXQ8"/>
<dbReference type="STRING" id="316058.RPB_2297"/>
<dbReference type="KEGG" id="rpb:RPB_2297"/>
<dbReference type="eggNOG" id="COG0089">
    <property type="taxonomic scope" value="Bacteria"/>
</dbReference>
<dbReference type="HOGENOM" id="CLU_037562_3_1_5"/>
<dbReference type="OrthoDB" id="9793353at2"/>
<dbReference type="Proteomes" id="UP000008809">
    <property type="component" value="Chromosome"/>
</dbReference>
<dbReference type="GO" id="GO:1990904">
    <property type="term" value="C:ribonucleoprotein complex"/>
    <property type="evidence" value="ECO:0007669"/>
    <property type="project" value="UniProtKB-KW"/>
</dbReference>
<dbReference type="GO" id="GO:0005840">
    <property type="term" value="C:ribosome"/>
    <property type="evidence" value="ECO:0007669"/>
    <property type="project" value="UniProtKB-KW"/>
</dbReference>
<dbReference type="GO" id="GO:0019843">
    <property type="term" value="F:rRNA binding"/>
    <property type="evidence" value="ECO:0007669"/>
    <property type="project" value="UniProtKB-UniRule"/>
</dbReference>
<dbReference type="GO" id="GO:0003735">
    <property type="term" value="F:structural constituent of ribosome"/>
    <property type="evidence" value="ECO:0007669"/>
    <property type="project" value="InterPro"/>
</dbReference>
<dbReference type="GO" id="GO:0006412">
    <property type="term" value="P:translation"/>
    <property type="evidence" value="ECO:0007669"/>
    <property type="project" value="UniProtKB-UniRule"/>
</dbReference>
<dbReference type="FunFam" id="3.30.70.330:FF:000001">
    <property type="entry name" value="50S ribosomal protein L23"/>
    <property type="match status" value="1"/>
</dbReference>
<dbReference type="Gene3D" id="3.30.70.330">
    <property type="match status" value="1"/>
</dbReference>
<dbReference type="HAMAP" id="MF_01369_B">
    <property type="entry name" value="Ribosomal_uL23_B"/>
    <property type="match status" value="1"/>
</dbReference>
<dbReference type="InterPro" id="IPR012677">
    <property type="entry name" value="Nucleotide-bd_a/b_plait_sf"/>
</dbReference>
<dbReference type="InterPro" id="IPR013025">
    <property type="entry name" value="Ribosomal_uL23-like"/>
</dbReference>
<dbReference type="InterPro" id="IPR012678">
    <property type="entry name" value="Ribosomal_uL23/eL15/eS24_sf"/>
</dbReference>
<dbReference type="InterPro" id="IPR001014">
    <property type="entry name" value="Ribosomal_uL23_CS"/>
</dbReference>
<dbReference type="NCBIfam" id="NF004359">
    <property type="entry name" value="PRK05738.1-3"/>
    <property type="match status" value="1"/>
</dbReference>
<dbReference type="NCBIfam" id="NF004360">
    <property type="entry name" value="PRK05738.1-5"/>
    <property type="match status" value="1"/>
</dbReference>
<dbReference type="NCBIfam" id="NF004363">
    <property type="entry name" value="PRK05738.2-4"/>
    <property type="match status" value="1"/>
</dbReference>
<dbReference type="PANTHER" id="PTHR11620">
    <property type="entry name" value="60S RIBOSOMAL PROTEIN L23A"/>
    <property type="match status" value="1"/>
</dbReference>
<dbReference type="Pfam" id="PF00276">
    <property type="entry name" value="Ribosomal_L23"/>
    <property type="match status" value="1"/>
</dbReference>
<dbReference type="SUPFAM" id="SSF54189">
    <property type="entry name" value="Ribosomal proteins S24e, L23 and L15e"/>
    <property type="match status" value="1"/>
</dbReference>
<dbReference type="PROSITE" id="PS00050">
    <property type="entry name" value="RIBOSOMAL_L23"/>
    <property type="match status" value="1"/>
</dbReference>
<comment type="function">
    <text evidence="1">One of the early assembly proteins it binds 23S rRNA. One of the proteins that surrounds the polypeptide exit tunnel on the outside of the ribosome. Forms the main docking site for trigger factor binding to the ribosome.</text>
</comment>
<comment type="subunit">
    <text evidence="1">Part of the 50S ribosomal subunit. Contacts protein L29, and trigger factor when it is bound to the ribosome.</text>
</comment>
<comment type="similarity">
    <text evidence="1">Belongs to the universal ribosomal protein uL23 family.</text>
</comment>